<protein>
    <recommendedName>
        <fullName>Insulin-1</fullName>
    </recommendedName>
</protein>
<reference key="1">
    <citation type="journal article" date="1966" name="Am. J. Med.">
        <title>Species variation in the amino acid sequence of insulin.</title>
        <authorList>
            <person name="Smith L.F."/>
        </authorList>
    </citation>
    <scope>PROTEIN SEQUENCE</scope>
</reference>
<keyword id="KW-0119">Carbohydrate metabolism</keyword>
<keyword id="KW-0903">Direct protein sequencing</keyword>
<keyword id="KW-1015">Disulfide bond</keyword>
<keyword id="KW-0313">Glucose metabolism</keyword>
<keyword id="KW-0372">Hormone</keyword>
<keyword id="KW-0964">Secreted</keyword>
<feature type="chain" id="PRO_0000221093" description="Insulin-1">
    <location>
        <begin position="1"/>
        <end position="51"/>
    </location>
</feature>
<feature type="disulfide bond" description="Interchain (between B and A chains)">
    <location>
        <begin position="8"/>
        <end position="37"/>
    </location>
</feature>
<feature type="disulfide bond" description="Interchain (between B and A chains)">
    <location>
        <begin position="20"/>
        <end position="50"/>
    </location>
</feature>
<feature type="disulfide bond">
    <location>
        <begin position="36"/>
        <end position="41"/>
    </location>
</feature>
<feature type="non-consecutive residues" evidence="1">
    <location>
        <begin position="30"/>
        <end position="31"/>
    </location>
</feature>
<gene>
    <name type="primary">ins1</name>
</gene>
<evidence type="ECO:0000305" key="1"/>
<comment type="function">
    <text>Insulin decreases blood glucose concentration. It increases cell permeability to monosaccharides, amino acids and fatty acids. It accelerates glycolysis, the pentose phosphate cycle, and glycogen synthesis in liver.</text>
</comment>
<comment type="subunit">
    <text>Heterodimer of a B chain and an A chain linked by two disulfide bonds.</text>
</comment>
<comment type="subcellular location">
    <subcellularLocation>
        <location>Secreted</location>
    </subcellularLocation>
</comment>
<comment type="similarity">
    <text evidence="1">Belongs to the insulin family.</text>
</comment>
<proteinExistence type="evidence at protein level"/>
<name>INS1_BATSP</name>
<accession>P01337</accession>
<sequence>MAPPQHLCGSHLVDALYLVCGDRGFFYNPKGIVEQCCHRPCDIFDLQSYCN</sequence>
<organism>
    <name type="scientific">Batrachoididae sp.</name>
    <name type="common">Toadfish</name>
    <dbReference type="NCBI Taxonomy" id="8066"/>
    <lineage>
        <taxon>Eukaryota</taxon>
        <taxon>Metazoa</taxon>
        <taxon>Chordata</taxon>
        <taxon>Craniata</taxon>
        <taxon>Vertebrata</taxon>
        <taxon>Euteleostomi</taxon>
        <taxon>Actinopterygii</taxon>
        <taxon>Neopterygii</taxon>
        <taxon>Teleostei</taxon>
        <taxon>Neoteleostei</taxon>
        <taxon>Acanthomorphata</taxon>
        <taxon>Batrachoidaria</taxon>
        <taxon>Batrachoididae</taxon>
    </lineage>
</organism>
<dbReference type="PIR" id="A01604">
    <property type="entry name" value="INTF1"/>
</dbReference>
<dbReference type="SMR" id="P01337"/>
<dbReference type="GO" id="GO:0005615">
    <property type="term" value="C:extracellular space"/>
    <property type="evidence" value="ECO:0007669"/>
    <property type="project" value="TreeGrafter"/>
</dbReference>
<dbReference type="GO" id="GO:0005179">
    <property type="term" value="F:hormone activity"/>
    <property type="evidence" value="ECO:0007669"/>
    <property type="project" value="UniProtKB-KW"/>
</dbReference>
<dbReference type="GO" id="GO:0006006">
    <property type="term" value="P:glucose metabolic process"/>
    <property type="evidence" value="ECO:0007669"/>
    <property type="project" value="UniProtKB-KW"/>
</dbReference>
<dbReference type="CDD" id="cd04367">
    <property type="entry name" value="IlGF_insulin_like"/>
    <property type="match status" value="1"/>
</dbReference>
<dbReference type="Gene3D" id="1.10.100.10">
    <property type="entry name" value="Insulin-like"/>
    <property type="match status" value="1"/>
</dbReference>
<dbReference type="InterPro" id="IPR004825">
    <property type="entry name" value="Insulin"/>
</dbReference>
<dbReference type="InterPro" id="IPR016179">
    <property type="entry name" value="Insulin-like"/>
</dbReference>
<dbReference type="InterPro" id="IPR036438">
    <property type="entry name" value="Insulin-like_sf"/>
</dbReference>
<dbReference type="InterPro" id="IPR022353">
    <property type="entry name" value="Insulin_CS"/>
</dbReference>
<dbReference type="InterPro" id="IPR022352">
    <property type="entry name" value="Insulin_family"/>
</dbReference>
<dbReference type="PANTHER" id="PTHR11454:SF9">
    <property type="entry name" value="INSULIN"/>
    <property type="match status" value="1"/>
</dbReference>
<dbReference type="PANTHER" id="PTHR11454">
    <property type="entry name" value="INSULIN/INSULIN GROWTH FACTOR"/>
    <property type="match status" value="1"/>
</dbReference>
<dbReference type="Pfam" id="PF00049">
    <property type="entry name" value="Insulin"/>
    <property type="match status" value="2"/>
</dbReference>
<dbReference type="PRINTS" id="PR00277">
    <property type="entry name" value="INSULIN"/>
</dbReference>
<dbReference type="PRINTS" id="PR00276">
    <property type="entry name" value="INSULINFAMLY"/>
</dbReference>
<dbReference type="SMART" id="SM00078">
    <property type="entry name" value="IlGF"/>
    <property type="match status" value="1"/>
</dbReference>
<dbReference type="SUPFAM" id="SSF56994">
    <property type="entry name" value="Insulin-like"/>
    <property type="match status" value="1"/>
</dbReference>
<dbReference type="PROSITE" id="PS00262">
    <property type="entry name" value="INSULIN"/>
    <property type="match status" value="1"/>
</dbReference>